<keyword id="KW-1185">Reference proteome</keyword>
<keyword id="KW-0833">Ubl conjugation pathway</keyword>
<comment type="function">
    <text evidence="1">E2-like enzyme which forms an intermediate with UFM1 via a thioester linkage.</text>
</comment>
<comment type="similarity">
    <text evidence="2">Belongs to the ubiquitin-conjugating enzyme family. UFC1 subfamily.</text>
</comment>
<reference key="1">
    <citation type="journal article" date="2007" name="Science">
        <title>Sea anemone genome reveals ancestral eumetazoan gene repertoire and genomic organization.</title>
        <authorList>
            <person name="Putnam N.H."/>
            <person name="Srivastava M."/>
            <person name="Hellsten U."/>
            <person name="Dirks B."/>
            <person name="Chapman J."/>
            <person name="Salamov A."/>
            <person name="Terry A."/>
            <person name="Shapiro H."/>
            <person name="Lindquist E."/>
            <person name="Kapitonov V.V."/>
            <person name="Jurka J."/>
            <person name="Genikhovich G."/>
            <person name="Grigoriev I.V."/>
            <person name="Lucas S.M."/>
            <person name="Steele R.E."/>
            <person name="Finnerty J.R."/>
            <person name="Technau U."/>
            <person name="Martindale M.Q."/>
            <person name="Rokhsar D.S."/>
        </authorList>
    </citation>
    <scope>NUCLEOTIDE SEQUENCE [LARGE SCALE GENOMIC DNA]</scope>
    <source>
        <strain>CH2 X CH6</strain>
    </source>
</reference>
<feature type="chain" id="PRO_0000391960" description="Ubiquitin-fold modifier-conjugating enzyme 1">
    <location>
        <begin position="1"/>
        <end position="169"/>
    </location>
</feature>
<feature type="active site" description="Glycyl thioester intermediate" evidence="1">
    <location>
        <position position="116"/>
    </location>
</feature>
<sequence>MVDEATKKTLAAIPLLKTKAGPRDGKDWVDRLKEEYTSLIKYVSNNKEADNDWFRLESNKEGTRWFGKCWYIHNLLKYEFDVEFDIPITYPTTAPEIALPELDGKTAKMYRGGKICMTDHFKPLWGRNVPRFGIAHAMALGLGPWLAVEIPDLIEKGLIKHKDKSESSR</sequence>
<gene>
    <name type="ORF">v1g214407</name>
</gene>
<dbReference type="EMBL" id="DS469705">
    <property type="protein sequence ID" value="EDO35210.1"/>
    <property type="molecule type" value="Genomic_DNA"/>
</dbReference>
<dbReference type="RefSeq" id="XP_001627310.1">
    <property type="nucleotide sequence ID" value="XM_001627260.1"/>
</dbReference>
<dbReference type="SMR" id="A7SM54"/>
<dbReference type="STRING" id="45351.A7SM54"/>
<dbReference type="EnsemblMetazoa" id="EDO35210">
    <property type="protein sequence ID" value="EDO35210"/>
    <property type="gene ID" value="NEMVEDRAFT_v1g214407"/>
</dbReference>
<dbReference type="KEGG" id="nve:5506607"/>
<dbReference type="eggNOG" id="KOG3357">
    <property type="taxonomic scope" value="Eukaryota"/>
</dbReference>
<dbReference type="HOGENOM" id="CLU_101170_0_0_1"/>
<dbReference type="InParanoid" id="A7SM54"/>
<dbReference type="OMA" id="LWQKNVP"/>
<dbReference type="PhylomeDB" id="A7SM54"/>
<dbReference type="Proteomes" id="UP000001593">
    <property type="component" value="Unassembled WGS sequence"/>
</dbReference>
<dbReference type="GO" id="GO:0061657">
    <property type="term" value="F:UFM1 conjugating enzyme activity"/>
    <property type="evidence" value="ECO:0007669"/>
    <property type="project" value="InterPro"/>
</dbReference>
<dbReference type="GO" id="GO:0071568">
    <property type="term" value="F:UFM1 transferase activity"/>
    <property type="evidence" value="ECO:0000318"/>
    <property type="project" value="GO_Central"/>
</dbReference>
<dbReference type="GO" id="GO:0071569">
    <property type="term" value="P:protein ufmylation"/>
    <property type="evidence" value="ECO:0007669"/>
    <property type="project" value="InterPro"/>
</dbReference>
<dbReference type="GO" id="GO:0034976">
    <property type="term" value="P:response to endoplasmic reticulum stress"/>
    <property type="evidence" value="ECO:0000318"/>
    <property type="project" value="GO_Central"/>
</dbReference>
<dbReference type="GO" id="GO:0061709">
    <property type="term" value="P:reticulophagy"/>
    <property type="evidence" value="ECO:0000318"/>
    <property type="project" value="GO_Central"/>
</dbReference>
<dbReference type="CDD" id="cd11686">
    <property type="entry name" value="UBCc_UFC1"/>
    <property type="match status" value="1"/>
</dbReference>
<dbReference type="FunFam" id="3.10.110.10:FF:000042">
    <property type="entry name" value="Ubiquitin-fold modifier-conjugating enzyme 1"/>
    <property type="match status" value="1"/>
</dbReference>
<dbReference type="Gene3D" id="3.10.110.10">
    <property type="entry name" value="Ubiquitin Conjugating Enzyme"/>
    <property type="match status" value="1"/>
</dbReference>
<dbReference type="InterPro" id="IPR016135">
    <property type="entry name" value="UBQ-conjugating_enzyme/RWD"/>
</dbReference>
<dbReference type="InterPro" id="IPR014806">
    <property type="entry name" value="Ufc1"/>
</dbReference>
<dbReference type="PANTHER" id="PTHR12921">
    <property type="entry name" value="UBIQUITIN-FOLD MODIFIER-CONJUGATING ENZYME 1"/>
    <property type="match status" value="1"/>
</dbReference>
<dbReference type="PANTHER" id="PTHR12921:SF0">
    <property type="entry name" value="UBIQUITIN-FOLD MODIFIER-CONJUGATING ENZYME 1"/>
    <property type="match status" value="1"/>
</dbReference>
<dbReference type="Pfam" id="PF08694">
    <property type="entry name" value="UFC1"/>
    <property type="match status" value="1"/>
</dbReference>
<dbReference type="PIRSF" id="PIRSF008716">
    <property type="entry name" value="DUF1782"/>
    <property type="match status" value="1"/>
</dbReference>
<dbReference type="SUPFAM" id="SSF54495">
    <property type="entry name" value="UBC-like"/>
    <property type="match status" value="1"/>
</dbReference>
<evidence type="ECO:0000250" key="1"/>
<evidence type="ECO:0000305" key="2"/>
<proteinExistence type="inferred from homology"/>
<name>UFC1_NEMVE</name>
<protein>
    <recommendedName>
        <fullName>Ubiquitin-fold modifier-conjugating enzyme 1</fullName>
    </recommendedName>
    <alternativeName>
        <fullName>Ufm1-conjugating enzyme 1</fullName>
    </alternativeName>
</protein>
<organism>
    <name type="scientific">Nematostella vectensis</name>
    <name type="common">Starlet sea anemone</name>
    <dbReference type="NCBI Taxonomy" id="45351"/>
    <lineage>
        <taxon>Eukaryota</taxon>
        <taxon>Metazoa</taxon>
        <taxon>Cnidaria</taxon>
        <taxon>Anthozoa</taxon>
        <taxon>Hexacorallia</taxon>
        <taxon>Actiniaria</taxon>
        <taxon>Edwardsiidae</taxon>
        <taxon>Nematostella</taxon>
    </lineage>
</organism>
<accession>A7SM54</accession>